<name>CHLM_SYNY3</name>
<sequence>MTNAALDDKTIVRDYFNSTGFDRWRRIYGDGQVNFVQKDIRVGHQQTVDSVVAWLVADGNLPGLLVCDAGCGVGSLSIPLAQAGALVYGSDISEKMVGEAQQKAQEVLAYGNQPTFMTQDLAQLGGKYDTVICLDVLIHYPTEEASAMISHLASLADRRLILSFAPKTLGLTVLKKIGGLFPGPSKTTRAYQHKEADIRKILGDNGFSIARTGMTSTRFYYSRILEAVRS</sequence>
<accession>Q55467</accession>
<accession>Q55344</accession>
<dbReference type="EC" id="2.1.1.11"/>
<dbReference type="EMBL" id="L47126">
    <property type="protein sequence ID" value="AAA85380.1"/>
    <property type="molecule type" value="Genomic_DNA"/>
</dbReference>
<dbReference type="EMBL" id="BA000022">
    <property type="protein sequence ID" value="BAA10812.1"/>
    <property type="molecule type" value="Genomic_DNA"/>
</dbReference>
<dbReference type="PIR" id="S71781">
    <property type="entry name" value="S71781"/>
</dbReference>
<dbReference type="PDB" id="4QDJ">
    <property type="method" value="X-ray"/>
    <property type="resolution" value="1.60 A"/>
    <property type="chains" value="A=1-230"/>
</dbReference>
<dbReference type="PDB" id="4QDK">
    <property type="method" value="X-ray"/>
    <property type="resolution" value="1.70 A"/>
    <property type="chains" value="A/B=1-230"/>
</dbReference>
<dbReference type="PDBsum" id="4QDJ"/>
<dbReference type="PDBsum" id="4QDK"/>
<dbReference type="SMR" id="Q55467"/>
<dbReference type="IntAct" id="Q55467">
    <property type="interactions" value="4"/>
</dbReference>
<dbReference type="STRING" id="1148.gene:10500316"/>
<dbReference type="PaxDb" id="1148-1001325"/>
<dbReference type="EnsemblBacteria" id="BAA10812">
    <property type="protein sequence ID" value="BAA10812"/>
    <property type="gene ID" value="BAA10812"/>
</dbReference>
<dbReference type="KEGG" id="syn:slr0525"/>
<dbReference type="eggNOG" id="COG2227">
    <property type="taxonomic scope" value="Bacteria"/>
</dbReference>
<dbReference type="InParanoid" id="Q55467"/>
<dbReference type="PhylomeDB" id="Q55467"/>
<dbReference type="BRENDA" id="2.1.1.11">
    <property type="organism ID" value="382"/>
</dbReference>
<dbReference type="SABIO-RK" id="Q55467"/>
<dbReference type="UniPathway" id="UPA00670"/>
<dbReference type="EvolutionaryTrace" id="Q55467"/>
<dbReference type="Proteomes" id="UP000001425">
    <property type="component" value="Chromosome"/>
</dbReference>
<dbReference type="GO" id="GO:0046406">
    <property type="term" value="F:magnesium protoporphyrin IX methyltransferase activity"/>
    <property type="evidence" value="ECO:0007669"/>
    <property type="project" value="UniProtKB-EC"/>
</dbReference>
<dbReference type="GO" id="GO:0008168">
    <property type="term" value="F:methyltransferase activity"/>
    <property type="evidence" value="ECO:0000318"/>
    <property type="project" value="GO_Central"/>
</dbReference>
<dbReference type="GO" id="GO:0036068">
    <property type="term" value="P:light-independent chlorophyll biosynthetic process"/>
    <property type="evidence" value="ECO:0007669"/>
    <property type="project" value="UniProtKB-UniPathway"/>
</dbReference>
<dbReference type="GO" id="GO:0032259">
    <property type="term" value="P:methylation"/>
    <property type="evidence" value="ECO:0007669"/>
    <property type="project" value="UniProtKB-KW"/>
</dbReference>
<dbReference type="GO" id="GO:0015979">
    <property type="term" value="P:photosynthesis"/>
    <property type="evidence" value="ECO:0007669"/>
    <property type="project" value="UniProtKB-KW"/>
</dbReference>
<dbReference type="CDD" id="cd02440">
    <property type="entry name" value="AdoMet_MTases"/>
    <property type="match status" value="1"/>
</dbReference>
<dbReference type="Gene3D" id="3.40.50.150">
    <property type="entry name" value="Vaccinia Virus protein VP39"/>
    <property type="match status" value="1"/>
</dbReference>
<dbReference type="InterPro" id="IPR010251">
    <property type="entry name" value="Mg_prot_MeTrfase"/>
</dbReference>
<dbReference type="InterPro" id="IPR010940">
    <property type="entry name" value="Mg_prot_MeTrfase_C"/>
</dbReference>
<dbReference type="InterPro" id="IPR029063">
    <property type="entry name" value="SAM-dependent_MTases_sf"/>
</dbReference>
<dbReference type="NCBIfam" id="TIGR02021">
    <property type="entry name" value="BchM-ChlM"/>
    <property type="match status" value="1"/>
</dbReference>
<dbReference type="PANTHER" id="PTHR43464">
    <property type="entry name" value="METHYLTRANSFERASE"/>
    <property type="match status" value="1"/>
</dbReference>
<dbReference type="PANTHER" id="PTHR43464:SF19">
    <property type="entry name" value="UBIQUINONE BIOSYNTHESIS O-METHYLTRANSFERASE, MITOCHONDRIAL"/>
    <property type="match status" value="1"/>
</dbReference>
<dbReference type="Pfam" id="PF07109">
    <property type="entry name" value="Mg-por_mtran_C"/>
    <property type="match status" value="1"/>
</dbReference>
<dbReference type="SUPFAM" id="SSF53335">
    <property type="entry name" value="S-adenosyl-L-methionine-dependent methyltransferases"/>
    <property type="match status" value="1"/>
</dbReference>
<dbReference type="PROSITE" id="PS51556">
    <property type="entry name" value="SAM_MT_MG_PIX"/>
    <property type="match status" value="1"/>
</dbReference>
<evidence type="ECO:0000255" key="1">
    <source>
        <dbReference type="PROSITE-ProRule" id="PRU00889"/>
    </source>
</evidence>
<evidence type="ECO:0000305" key="2"/>
<evidence type="ECO:0007829" key="3">
    <source>
        <dbReference type="PDB" id="4QDJ"/>
    </source>
</evidence>
<evidence type="ECO:0007829" key="4">
    <source>
        <dbReference type="PDB" id="4QDK"/>
    </source>
</evidence>
<feature type="chain" id="PRO_0000204421" description="Magnesium-protoporphyrin O-methyltransferase">
    <location>
        <begin position="1"/>
        <end position="230"/>
    </location>
</feature>
<feature type="sequence conflict" description="In Ref. 1; AAA85380." evidence="2" ref="1">
    <original>A</original>
    <variation>V</variation>
    <location>
        <position position="190"/>
    </location>
</feature>
<feature type="helix" evidence="3">
    <location>
        <begin position="8"/>
        <end position="16"/>
    </location>
</feature>
<feature type="helix" evidence="3">
    <location>
        <begin position="19"/>
        <end position="27"/>
    </location>
</feature>
<feature type="strand" evidence="3">
    <location>
        <begin position="29"/>
        <end position="31"/>
    </location>
</feature>
<feature type="helix" evidence="3">
    <location>
        <begin position="35"/>
        <end position="58"/>
    </location>
</feature>
<feature type="strand" evidence="3">
    <location>
        <begin position="65"/>
        <end position="69"/>
    </location>
</feature>
<feature type="turn" evidence="3">
    <location>
        <begin position="72"/>
        <end position="76"/>
    </location>
</feature>
<feature type="helix" evidence="3">
    <location>
        <begin position="77"/>
        <end position="82"/>
    </location>
</feature>
<feature type="strand" evidence="3">
    <location>
        <begin position="86"/>
        <end position="92"/>
    </location>
</feature>
<feature type="helix" evidence="3">
    <location>
        <begin position="94"/>
        <end position="108"/>
    </location>
</feature>
<feature type="strand" evidence="3">
    <location>
        <begin position="115"/>
        <end position="118"/>
    </location>
</feature>
<feature type="helix" evidence="3">
    <location>
        <begin position="121"/>
        <end position="123"/>
    </location>
</feature>
<feature type="strand" evidence="3">
    <location>
        <begin position="128"/>
        <end position="133"/>
    </location>
</feature>
<feature type="helix" evidence="3">
    <location>
        <begin position="137"/>
        <end position="139"/>
    </location>
</feature>
<feature type="helix" evidence="3">
    <location>
        <begin position="142"/>
        <end position="155"/>
    </location>
</feature>
<feature type="strand" evidence="3">
    <location>
        <begin position="156"/>
        <end position="164"/>
    </location>
</feature>
<feature type="helix" evidence="4">
    <location>
        <begin position="169"/>
        <end position="178"/>
    </location>
</feature>
<feature type="helix" evidence="3">
    <location>
        <begin position="195"/>
        <end position="204"/>
    </location>
</feature>
<feature type="strand" evidence="3">
    <location>
        <begin position="207"/>
        <end position="216"/>
    </location>
</feature>
<feature type="strand" evidence="3">
    <location>
        <begin position="221"/>
        <end position="229"/>
    </location>
</feature>
<gene>
    <name type="primary">chlM</name>
    <name type="ordered locus">slr0525</name>
</gene>
<protein>
    <recommendedName>
        <fullName>Magnesium-protoporphyrin O-methyltransferase</fullName>
        <ecNumber>2.1.1.11</ecNumber>
    </recommendedName>
    <alternativeName>
        <fullName>Magnesium-protoporphyrin IX methyltransferase</fullName>
    </alternativeName>
</protein>
<proteinExistence type="evidence at protein level"/>
<reference key="1">
    <citation type="journal article" date="1996" name="Plant Mol. Biol.">
        <title>Cloning and characterization of the chlorophyll biosynthesis gene chlM from Synechocystis PCC 6803 by complementation of a bacteriochlorophyll biosynthesis mutant of Rhodobacter capsulatus.</title>
        <authorList>
            <person name="Smith C.A."/>
            <person name="Suzuki J.Y."/>
            <person name="Bauer C.E."/>
        </authorList>
    </citation>
    <scope>NUCLEOTIDE SEQUENCE [GENOMIC DNA]</scope>
</reference>
<reference key="2">
    <citation type="journal article" date="1995" name="DNA Res.">
        <title>Sequence analysis of the genome of the unicellular cyanobacterium Synechocystis sp. strain PCC6803. I. Sequence features in the 1 Mb region from map positions 64% to 92% of the genome.</title>
        <authorList>
            <person name="Kaneko T."/>
            <person name="Tanaka A."/>
            <person name="Sato S."/>
            <person name="Kotani H."/>
            <person name="Sazuka T."/>
            <person name="Miyajima N."/>
            <person name="Sugiura M."/>
            <person name="Tabata S."/>
        </authorList>
    </citation>
    <scope>NUCLEOTIDE SEQUENCE [LARGE SCALE GENOMIC DNA]</scope>
    <source>
        <strain>ATCC 27184 / PCC 6803 / N-1</strain>
    </source>
</reference>
<reference key="3">
    <citation type="journal article" date="1996" name="DNA Res.">
        <title>Sequence analysis of the genome of the unicellular cyanobacterium Synechocystis sp. strain PCC6803. II. Sequence determination of the entire genome and assignment of potential protein-coding regions.</title>
        <authorList>
            <person name="Kaneko T."/>
            <person name="Sato S."/>
            <person name="Kotani H."/>
            <person name="Tanaka A."/>
            <person name="Asamizu E."/>
            <person name="Nakamura Y."/>
            <person name="Miyajima N."/>
            <person name="Hirosawa M."/>
            <person name="Sugiura M."/>
            <person name="Sasamoto S."/>
            <person name="Kimura T."/>
            <person name="Hosouchi T."/>
            <person name="Matsuno A."/>
            <person name="Muraki A."/>
            <person name="Nakazaki N."/>
            <person name="Naruo K."/>
            <person name="Okumura S."/>
            <person name="Shimpo S."/>
            <person name="Takeuchi C."/>
            <person name="Wada T."/>
            <person name="Watanabe A."/>
            <person name="Yamada M."/>
            <person name="Yasuda M."/>
            <person name="Tabata S."/>
        </authorList>
    </citation>
    <scope>NUCLEOTIDE SEQUENCE [LARGE SCALE GENOMIC DNA]</scope>
    <source>
        <strain>ATCC 27184 / PCC 6803 / Kazusa</strain>
    </source>
</reference>
<organism>
    <name type="scientific">Synechocystis sp. (strain ATCC 27184 / PCC 6803 / Kazusa)</name>
    <dbReference type="NCBI Taxonomy" id="1111708"/>
    <lineage>
        <taxon>Bacteria</taxon>
        <taxon>Bacillati</taxon>
        <taxon>Cyanobacteriota</taxon>
        <taxon>Cyanophyceae</taxon>
        <taxon>Synechococcales</taxon>
        <taxon>Merismopediaceae</taxon>
        <taxon>Synechocystis</taxon>
    </lineage>
</organism>
<comment type="function">
    <text>Converts Mg-protoporphyrin IX to Mg-protoporphyrin IX methylester using S-adenosyl-L-methionine as a cofactor.</text>
</comment>
<comment type="catalytic activity">
    <reaction evidence="1">
        <text>Mg-protoporphyrin IX + S-adenosyl-L-methionine = Mg-protoporphyrin IX 13-monomethyl ester + S-adenosyl-L-homocysteine</text>
        <dbReference type="Rhea" id="RHEA:17809"/>
        <dbReference type="ChEBI" id="CHEBI:57856"/>
        <dbReference type="ChEBI" id="CHEBI:59789"/>
        <dbReference type="ChEBI" id="CHEBI:60491"/>
        <dbReference type="ChEBI" id="CHEBI:60492"/>
        <dbReference type="EC" id="2.1.1.11"/>
    </reaction>
</comment>
<comment type="pathway">
    <text>Porphyrin-containing compound metabolism; chlorophyll biosynthesis (light-independent).</text>
</comment>
<comment type="similarity">
    <text evidence="1">Belongs to the class I-like SAM-binding methyltransferase superfamily. Magnesium protoporphyrin O-methyltransferase family.</text>
</comment>
<keyword id="KW-0002">3D-structure</keyword>
<keyword id="KW-0149">Chlorophyll biosynthesis</keyword>
<keyword id="KW-0489">Methyltransferase</keyword>
<keyword id="KW-0602">Photosynthesis</keyword>
<keyword id="KW-1185">Reference proteome</keyword>
<keyword id="KW-0949">S-adenosyl-L-methionine</keyword>
<keyword id="KW-0808">Transferase</keyword>